<organism>
    <name type="scientific">Prochlorococcus marinus (strain NATL2A)</name>
    <dbReference type="NCBI Taxonomy" id="59920"/>
    <lineage>
        <taxon>Bacteria</taxon>
        <taxon>Bacillati</taxon>
        <taxon>Cyanobacteriota</taxon>
        <taxon>Cyanophyceae</taxon>
        <taxon>Synechococcales</taxon>
        <taxon>Prochlorococcaceae</taxon>
        <taxon>Prochlorococcus</taxon>
    </lineage>
</organism>
<evidence type="ECO:0000255" key="1">
    <source>
        <dbReference type="HAMAP-Rule" id="MF_00009"/>
    </source>
</evidence>
<feature type="chain" id="PRO_0000284272" description="Endoribonuclease YbeY">
    <location>
        <begin position="1"/>
        <end position="184"/>
    </location>
</feature>
<feature type="binding site" evidence="1">
    <location>
        <position position="151"/>
    </location>
    <ligand>
        <name>Zn(2+)</name>
        <dbReference type="ChEBI" id="CHEBI:29105"/>
        <note>catalytic</note>
    </ligand>
</feature>
<feature type="binding site" evidence="1">
    <location>
        <position position="155"/>
    </location>
    <ligand>
        <name>Zn(2+)</name>
        <dbReference type="ChEBI" id="CHEBI:29105"/>
        <note>catalytic</note>
    </ligand>
</feature>
<feature type="binding site" evidence="1">
    <location>
        <position position="161"/>
    </location>
    <ligand>
        <name>Zn(2+)</name>
        <dbReference type="ChEBI" id="CHEBI:29105"/>
        <note>catalytic</note>
    </ligand>
</feature>
<proteinExistence type="inferred from homology"/>
<protein>
    <recommendedName>
        <fullName evidence="1">Endoribonuclease YbeY</fullName>
        <ecNumber evidence="1">3.1.-.-</ecNumber>
    </recommendedName>
</protein>
<gene>
    <name evidence="1" type="primary">ybeY</name>
    <name type="ordered locus">PMN2A_1550</name>
</gene>
<dbReference type="EC" id="3.1.-.-" evidence="1"/>
<dbReference type="EMBL" id="CP000095">
    <property type="protein sequence ID" value="AAZ59038.1"/>
    <property type="molecule type" value="Genomic_DNA"/>
</dbReference>
<dbReference type="RefSeq" id="WP_011294183.1">
    <property type="nucleotide sequence ID" value="NC_007335.2"/>
</dbReference>
<dbReference type="SMR" id="Q46HJ0"/>
<dbReference type="STRING" id="59920.PMN2A_1550"/>
<dbReference type="KEGG" id="pmn:PMN2A_1550"/>
<dbReference type="HOGENOM" id="CLU_106710_3_0_3"/>
<dbReference type="OrthoDB" id="9807740at2"/>
<dbReference type="PhylomeDB" id="Q46HJ0"/>
<dbReference type="Proteomes" id="UP000002535">
    <property type="component" value="Chromosome"/>
</dbReference>
<dbReference type="GO" id="GO:0005737">
    <property type="term" value="C:cytoplasm"/>
    <property type="evidence" value="ECO:0007669"/>
    <property type="project" value="UniProtKB-SubCell"/>
</dbReference>
<dbReference type="GO" id="GO:0004222">
    <property type="term" value="F:metalloendopeptidase activity"/>
    <property type="evidence" value="ECO:0007669"/>
    <property type="project" value="InterPro"/>
</dbReference>
<dbReference type="GO" id="GO:0004521">
    <property type="term" value="F:RNA endonuclease activity"/>
    <property type="evidence" value="ECO:0007669"/>
    <property type="project" value="UniProtKB-UniRule"/>
</dbReference>
<dbReference type="GO" id="GO:0008270">
    <property type="term" value="F:zinc ion binding"/>
    <property type="evidence" value="ECO:0007669"/>
    <property type="project" value="UniProtKB-UniRule"/>
</dbReference>
<dbReference type="GO" id="GO:0006364">
    <property type="term" value="P:rRNA processing"/>
    <property type="evidence" value="ECO:0007669"/>
    <property type="project" value="UniProtKB-UniRule"/>
</dbReference>
<dbReference type="Gene3D" id="3.40.390.30">
    <property type="entry name" value="Metalloproteases ('zincins'), catalytic domain"/>
    <property type="match status" value="1"/>
</dbReference>
<dbReference type="HAMAP" id="MF_00009">
    <property type="entry name" value="Endoribonucl_YbeY"/>
    <property type="match status" value="1"/>
</dbReference>
<dbReference type="InterPro" id="IPR023091">
    <property type="entry name" value="MetalPrtase_cat_dom_sf_prd"/>
</dbReference>
<dbReference type="InterPro" id="IPR002036">
    <property type="entry name" value="YbeY"/>
</dbReference>
<dbReference type="InterPro" id="IPR020549">
    <property type="entry name" value="YbeY_CS"/>
</dbReference>
<dbReference type="NCBIfam" id="TIGR00043">
    <property type="entry name" value="rRNA maturation RNase YbeY"/>
    <property type="match status" value="1"/>
</dbReference>
<dbReference type="PANTHER" id="PTHR46986">
    <property type="entry name" value="ENDORIBONUCLEASE YBEY, CHLOROPLASTIC"/>
    <property type="match status" value="1"/>
</dbReference>
<dbReference type="PANTHER" id="PTHR46986:SF1">
    <property type="entry name" value="ENDORIBONUCLEASE YBEY, CHLOROPLASTIC"/>
    <property type="match status" value="1"/>
</dbReference>
<dbReference type="Pfam" id="PF02130">
    <property type="entry name" value="YbeY"/>
    <property type="match status" value="1"/>
</dbReference>
<dbReference type="SUPFAM" id="SSF55486">
    <property type="entry name" value="Metalloproteases ('zincins'), catalytic domain"/>
    <property type="match status" value="1"/>
</dbReference>
<dbReference type="PROSITE" id="PS01306">
    <property type="entry name" value="UPF0054"/>
    <property type="match status" value="1"/>
</dbReference>
<keyword id="KW-0963">Cytoplasm</keyword>
<keyword id="KW-0255">Endonuclease</keyword>
<keyword id="KW-0378">Hydrolase</keyword>
<keyword id="KW-0479">Metal-binding</keyword>
<keyword id="KW-0540">Nuclease</keyword>
<keyword id="KW-1185">Reference proteome</keyword>
<keyword id="KW-0690">Ribosome biogenesis</keyword>
<keyword id="KW-0698">rRNA processing</keyword>
<keyword id="KW-0862">Zinc</keyword>
<name>YBEY_PROMT</name>
<accession>Q46HJ0</accession>
<reference key="1">
    <citation type="journal article" date="2007" name="PLoS Genet.">
        <title>Patterns and implications of gene gain and loss in the evolution of Prochlorococcus.</title>
        <authorList>
            <person name="Kettler G.C."/>
            <person name="Martiny A.C."/>
            <person name="Huang K."/>
            <person name="Zucker J."/>
            <person name="Coleman M.L."/>
            <person name="Rodrigue S."/>
            <person name="Chen F."/>
            <person name="Lapidus A."/>
            <person name="Ferriera S."/>
            <person name="Johnson J."/>
            <person name="Steglich C."/>
            <person name="Church G.M."/>
            <person name="Richardson P."/>
            <person name="Chisholm S.W."/>
        </authorList>
    </citation>
    <scope>NUCLEOTIDE SEQUENCE [LARGE SCALE GENOMIC DNA]</scope>
    <source>
        <strain>NATL2A</strain>
    </source>
</reference>
<sequence length="184" mass="20806">MVNSSTSSDQLDVDLSFTPFPVQDLDVFVNSDTLELMKNPSKWIEEIGSWIRFIQVNSALKCPEIVLNSSQFSLGLELTNDKKILDLNHAWLGQSKATDVLSFPIIDETFFGVSNECIELGDIVISVPTAIRQAKDNNADLFRELRWLATHGLLHLLGWDHSDEESLHKMLLIQEQLLEIRGIL</sequence>
<comment type="function">
    <text evidence="1">Single strand-specific metallo-endoribonuclease involved in late-stage 70S ribosome quality control and in maturation of the 3' terminus of the 16S rRNA.</text>
</comment>
<comment type="cofactor">
    <cofactor evidence="1">
        <name>Zn(2+)</name>
        <dbReference type="ChEBI" id="CHEBI:29105"/>
    </cofactor>
    <text evidence="1">Binds 1 zinc ion.</text>
</comment>
<comment type="subcellular location">
    <subcellularLocation>
        <location evidence="1">Cytoplasm</location>
    </subcellularLocation>
</comment>
<comment type="similarity">
    <text evidence="1">Belongs to the endoribonuclease YbeY family.</text>
</comment>